<gene>
    <name type="ordered locus">PYRAB05010</name>
    <name type="ORF">PAB7122</name>
</gene>
<organism>
    <name type="scientific">Pyrococcus abyssi (strain GE5 / Orsay)</name>
    <dbReference type="NCBI Taxonomy" id="272844"/>
    <lineage>
        <taxon>Archaea</taxon>
        <taxon>Methanobacteriati</taxon>
        <taxon>Methanobacteriota</taxon>
        <taxon>Thermococci</taxon>
        <taxon>Thermococcales</taxon>
        <taxon>Thermococcaceae</taxon>
        <taxon>Pyrococcus</taxon>
    </lineage>
</organism>
<proteinExistence type="inferred from homology"/>
<feature type="chain" id="PRO_0000139472" description="UPF0235 protein PYRAB05010">
    <location>
        <begin position="1"/>
        <end position="92"/>
    </location>
</feature>
<comment type="similarity">
    <text evidence="1">Belongs to the UPF0235 family.</text>
</comment>
<sequence length="92" mass="10561">MLKEVREGVILRVIVKPNARENSIEGIDEWRGRIKVNIKAQPVKGKANRELIKFLSNLFGAEVEILKGETSREKDVLVRGVNLEEVKRRLKL</sequence>
<name>Y501_PYRAB</name>
<evidence type="ECO:0000255" key="1">
    <source>
        <dbReference type="HAMAP-Rule" id="MF_00634"/>
    </source>
</evidence>
<accession>Q9V1C6</accession>
<accession>G8ZGL1</accession>
<reference key="1">
    <citation type="journal article" date="2003" name="Mol. Microbiol.">
        <title>An integrated analysis of the genome of the hyperthermophilic archaeon Pyrococcus abyssi.</title>
        <authorList>
            <person name="Cohen G.N."/>
            <person name="Barbe V."/>
            <person name="Flament D."/>
            <person name="Galperin M."/>
            <person name="Heilig R."/>
            <person name="Lecompte O."/>
            <person name="Poch O."/>
            <person name="Prieur D."/>
            <person name="Querellou J."/>
            <person name="Ripp R."/>
            <person name="Thierry J.-C."/>
            <person name="Van der Oost J."/>
            <person name="Weissenbach J."/>
            <person name="Zivanovic Y."/>
            <person name="Forterre P."/>
        </authorList>
    </citation>
    <scope>NUCLEOTIDE SEQUENCE [LARGE SCALE GENOMIC DNA]</scope>
    <source>
        <strain>GE5 / Orsay</strain>
    </source>
</reference>
<reference key="2">
    <citation type="journal article" date="2012" name="Curr. Microbiol.">
        <title>Re-annotation of two hyperthermophilic archaea Pyrococcus abyssi GE5 and Pyrococcus furiosus DSM 3638.</title>
        <authorList>
            <person name="Gao J."/>
            <person name="Wang J."/>
        </authorList>
    </citation>
    <scope>GENOME REANNOTATION</scope>
    <source>
        <strain>GE5 / Orsay</strain>
    </source>
</reference>
<protein>
    <recommendedName>
        <fullName evidence="1">UPF0235 protein PYRAB05010</fullName>
    </recommendedName>
</protein>
<dbReference type="EMBL" id="AJ248284">
    <property type="protein sequence ID" value="CAB49423.1"/>
    <property type="molecule type" value="Genomic_DNA"/>
</dbReference>
<dbReference type="EMBL" id="HE613800">
    <property type="protein sequence ID" value="CCE69890.1"/>
    <property type="molecule type" value="Genomic_DNA"/>
</dbReference>
<dbReference type="PIR" id="H75167">
    <property type="entry name" value="H75167"/>
</dbReference>
<dbReference type="RefSeq" id="WP_010867625.1">
    <property type="nucleotide sequence ID" value="NC_000868.1"/>
</dbReference>
<dbReference type="SMR" id="Q9V1C6"/>
<dbReference type="STRING" id="272844.PAB7122"/>
<dbReference type="KEGG" id="pab:PAB7122"/>
<dbReference type="PATRIC" id="fig|272844.11.peg.536"/>
<dbReference type="eggNOG" id="arCOG04058">
    <property type="taxonomic scope" value="Archaea"/>
</dbReference>
<dbReference type="HOGENOM" id="CLU_130694_6_1_2"/>
<dbReference type="OrthoDB" id="53248at2157"/>
<dbReference type="PhylomeDB" id="Q9V1C6"/>
<dbReference type="Proteomes" id="UP000000810">
    <property type="component" value="Chromosome"/>
</dbReference>
<dbReference type="Proteomes" id="UP000009139">
    <property type="component" value="Chromosome"/>
</dbReference>
<dbReference type="GO" id="GO:0005737">
    <property type="term" value="C:cytoplasm"/>
    <property type="evidence" value="ECO:0007669"/>
    <property type="project" value="TreeGrafter"/>
</dbReference>
<dbReference type="Gene3D" id="3.30.1200.10">
    <property type="entry name" value="YggU-like"/>
    <property type="match status" value="1"/>
</dbReference>
<dbReference type="HAMAP" id="MF_00634">
    <property type="entry name" value="UPF0235"/>
    <property type="match status" value="1"/>
</dbReference>
<dbReference type="InterPro" id="IPR003746">
    <property type="entry name" value="DUF167"/>
</dbReference>
<dbReference type="InterPro" id="IPR036591">
    <property type="entry name" value="YggU-like_sf"/>
</dbReference>
<dbReference type="NCBIfam" id="TIGR00251">
    <property type="entry name" value="DUF167 family protein"/>
    <property type="match status" value="1"/>
</dbReference>
<dbReference type="PANTHER" id="PTHR13420">
    <property type="entry name" value="UPF0235 PROTEIN C15ORF40"/>
    <property type="match status" value="1"/>
</dbReference>
<dbReference type="PANTHER" id="PTHR13420:SF7">
    <property type="entry name" value="UPF0235 PROTEIN C15ORF40"/>
    <property type="match status" value="1"/>
</dbReference>
<dbReference type="Pfam" id="PF02594">
    <property type="entry name" value="DUF167"/>
    <property type="match status" value="1"/>
</dbReference>
<dbReference type="SMART" id="SM01152">
    <property type="entry name" value="DUF167"/>
    <property type="match status" value="1"/>
</dbReference>
<dbReference type="SUPFAM" id="SSF69786">
    <property type="entry name" value="YggU-like"/>
    <property type="match status" value="1"/>
</dbReference>